<feature type="chain" id="PRO_1000144222" description="Large ribosomal subunit protein uL14">
    <location>
        <begin position="1"/>
        <end position="122"/>
    </location>
</feature>
<evidence type="ECO:0000255" key="1">
    <source>
        <dbReference type="HAMAP-Rule" id="MF_01367"/>
    </source>
</evidence>
<evidence type="ECO:0000305" key="2"/>
<dbReference type="EMBL" id="CP001176">
    <property type="protein sequence ID" value="ACK63174.1"/>
    <property type="molecule type" value="Genomic_DNA"/>
</dbReference>
<dbReference type="RefSeq" id="WP_000615912.1">
    <property type="nucleotide sequence ID" value="NZ_VEHB01000017.1"/>
</dbReference>
<dbReference type="SMR" id="B7HJ58"/>
<dbReference type="GeneID" id="93010933"/>
<dbReference type="KEGG" id="bcb:BCB4264_A0141"/>
<dbReference type="HOGENOM" id="CLU_095071_2_1_9"/>
<dbReference type="Proteomes" id="UP000007096">
    <property type="component" value="Chromosome"/>
</dbReference>
<dbReference type="GO" id="GO:0022625">
    <property type="term" value="C:cytosolic large ribosomal subunit"/>
    <property type="evidence" value="ECO:0007669"/>
    <property type="project" value="TreeGrafter"/>
</dbReference>
<dbReference type="GO" id="GO:0070180">
    <property type="term" value="F:large ribosomal subunit rRNA binding"/>
    <property type="evidence" value="ECO:0007669"/>
    <property type="project" value="TreeGrafter"/>
</dbReference>
<dbReference type="GO" id="GO:0003735">
    <property type="term" value="F:structural constituent of ribosome"/>
    <property type="evidence" value="ECO:0007669"/>
    <property type="project" value="InterPro"/>
</dbReference>
<dbReference type="GO" id="GO:0006412">
    <property type="term" value="P:translation"/>
    <property type="evidence" value="ECO:0007669"/>
    <property type="project" value="UniProtKB-UniRule"/>
</dbReference>
<dbReference type="CDD" id="cd00337">
    <property type="entry name" value="Ribosomal_uL14"/>
    <property type="match status" value="1"/>
</dbReference>
<dbReference type="FunFam" id="2.40.150.20:FF:000001">
    <property type="entry name" value="50S ribosomal protein L14"/>
    <property type="match status" value="1"/>
</dbReference>
<dbReference type="Gene3D" id="2.40.150.20">
    <property type="entry name" value="Ribosomal protein L14"/>
    <property type="match status" value="1"/>
</dbReference>
<dbReference type="HAMAP" id="MF_01367">
    <property type="entry name" value="Ribosomal_uL14"/>
    <property type="match status" value="1"/>
</dbReference>
<dbReference type="InterPro" id="IPR000218">
    <property type="entry name" value="Ribosomal_uL14"/>
</dbReference>
<dbReference type="InterPro" id="IPR005745">
    <property type="entry name" value="Ribosomal_uL14_bac-type"/>
</dbReference>
<dbReference type="InterPro" id="IPR019972">
    <property type="entry name" value="Ribosomal_uL14_CS"/>
</dbReference>
<dbReference type="InterPro" id="IPR036853">
    <property type="entry name" value="Ribosomal_uL14_sf"/>
</dbReference>
<dbReference type="NCBIfam" id="TIGR01067">
    <property type="entry name" value="rplN_bact"/>
    <property type="match status" value="1"/>
</dbReference>
<dbReference type="PANTHER" id="PTHR11761">
    <property type="entry name" value="50S/60S RIBOSOMAL PROTEIN L14/L23"/>
    <property type="match status" value="1"/>
</dbReference>
<dbReference type="PANTHER" id="PTHR11761:SF3">
    <property type="entry name" value="LARGE RIBOSOMAL SUBUNIT PROTEIN UL14M"/>
    <property type="match status" value="1"/>
</dbReference>
<dbReference type="Pfam" id="PF00238">
    <property type="entry name" value="Ribosomal_L14"/>
    <property type="match status" value="1"/>
</dbReference>
<dbReference type="SMART" id="SM01374">
    <property type="entry name" value="Ribosomal_L14"/>
    <property type="match status" value="1"/>
</dbReference>
<dbReference type="SUPFAM" id="SSF50193">
    <property type="entry name" value="Ribosomal protein L14"/>
    <property type="match status" value="1"/>
</dbReference>
<dbReference type="PROSITE" id="PS00049">
    <property type="entry name" value="RIBOSOMAL_L14"/>
    <property type="match status" value="1"/>
</dbReference>
<name>RL14_BACC4</name>
<proteinExistence type="inferred from homology"/>
<accession>B7HJ58</accession>
<reference key="1">
    <citation type="submission" date="2008-10" db="EMBL/GenBank/DDBJ databases">
        <title>Genome sequence of Bacillus cereus B4264.</title>
        <authorList>
            <person name="Dodson R.J."/>
            <person name="Durkin A.S."/>
            <person name="Rosovitz M.J."/>
            <person name="Rasko D.A."/>
            <person name="Hoffmaster A."/>
            <person name="Ravel J."/>
            <person name="Sutton G."/>
        </authorList>
    </citation>
    <scope>NUCLEOTIDE SEQUENCE [LARGE SCALE GENOMIC DNA]</scope>
    <source>
        <strain>B4264</strain>
    </source>
</reference>
<protein>
    <recommendedName>
        <fullName evidence="1">Large ribosomal subunit protein uL14</fullName>
    </recommendedName>
    <alternativeName>
        <fullName evidence="2">50S ribosomal protein L14</fullName>
    </alternativeName>
</protein>
<organism>
    <name type="scientific">Bacillus cereus (strain B4264)</name>
    <dbReference type="NCBI Taxonomy" id="405532"/>
    <lineage>
        <taxon>Bacteria</taxon>
        <taxon>Bacillati</taxon>
        <taxon>Bacillota</taxon>
        <taxon>Bacilli</taxon>
        <taxon>Bacillales</taxon>
        <taxon>Bacillaceae</taxon>
        <taxon>Bacillus</taxon>
        <taxon>Bacillus cereus group</taxon>
    </lineage>
</organism>
<keyword id="KW-0687">Ribonucleoprotein</keyword>
<keyword id="KW-0689">Ribosomal protein</keyword>
<keyword id="KW-0694">RNA-binding</keyword>
<keyword id="KW-0699">rRNA-binding</keyword>
<comment type="function">
    <text evidence="1">Binds to 23S rRNA. Forms part of two intersubunit bridges in the 70S ribosome.</text>
</comment>
<comment type="subunit">
    <text evidence="1">Part of the 50S ribosomal subunit. Forms a cluster with proteins L3 and L19. In the 70S ribosome, L14 and L19 interact and together make contacts with the 16S rRNA in bridges B5 and B8.</text>
</comment>
<comment type="similarity">
    <text evidence="1">Belongs to the universal ribosomal protein uL14 family.</text>
</comment>
<gene>
    <name evidence="1" type="primary">rplN</name>
    <name type="ordered locus">BCB4264_A0141</name>
</gene>
<sequence length="122" mass="13120">MIQQESRLKVADNSGARELLTIKVLGGSGRKYANIGDIIVATVKQATPGGVVKKGDVVKAVVVRTKSGARRPDGSYIKFDENAAVIIKDDKSPRGTRIFGPVARELRDSNFMKIVSLAPEVL</sequence>